<protein>
    <recommendedName>
        <fullName>Autophagy-related protein 9</fullName>
    </recommendedName>
</protein>
<evidence type="ECO:0000250" key="1">
    <source>
        <dbReference type="UniProtKB" id="O74312"/>
    </source>
</evidence>
<evidence type="ECO:0000250" key="2">
    <source>
        <dbReference type="UniProtKB" id="Q12142"/>
    </source>
</evidence>
<evidence type="ECO:0000255" key="3"/>
<evidence type="ECO:0000256" key="4">
    <source>
        <dbReference type="SAM" id="MobiDB-lite"/>
    </source>
</evidence>
<evidence type="ECO:0000305" key="5"/>
<organism>
    <name type="scientific">Scheffersomyces stipitis (strain ATCC 58785 / CBS 6054 / NBRC 10063 / NRRL Y-11545)</name>
    <name type="common">Yeast</name>
    <name type="synonym">Pichia stipitis</name>
    <dbReference type="NCBI Taxonomy" id="322104"/>
    <lineage>
        <taxon>Eukaryota</taxon>
        <taxon>Fungi</taxon>
        <taxon>Dikarya</taxon>
        <taxon>Ascomycota</taxon>
        <taxon>Saccharomycotina</taxon>
        <taxon>Pichiomycetes</taxon>
        <taxon>Debaryomycetaceae</taxon>
        <taxon>Scheffersomyces</taxon>
    </lineage>
</organism>
<proteinExistence type="inferred from homology"/>
<name>ATG9_PICST</name>
<keyword id="KW-0072">Autophagy</keyword>
<keyword id="KW-0968">Cytoplasmic vesicle</keyword>
<keyword id="KW-0256">Endoplasmic reticulum</keyword>
<keyword id="KW-0333">Golgi apparatus</keyword>
<keyword id="KW-0445">Lipid transport</keyword>
<keyword id="KW-0472">Membrane</keyword>
<keyword id="KW-0597">Phosphoprotein</keyword>
<keyword id="KW-1185">Reference proteome</keyword>
<keyword id="KW-0812">Transmembrane</keyword>
<keyword id="KW-1133">Transmembrane helix</keyword>
<keyword id="KW-0813">Transport</keyword>
<accession>A3LZS3</accession>
<gene>
    <name type="primary">ATG9</name>
    <name type="ORF">PICST_64286</name>
</gene>
<reference key="1">
    <citation type="journal article" date="2007" name="Nat. Biotechnol.">
        <title>Genome sequence of the lignocellulose-bioconverting and xylose-fermenting yeast Pichia stipitis.</title>
        <authorList>
            <person name="Jeffries T.W."/>
            <person name="Grigoriev I.V."/>
            <person name="Grimwood J."/>
            <person name="Laplaza J.M."/>
            <person name="Aerts A."/>
            <person name="Salamov A."/>
            <person name="Schmutz J."/>
            <person name="Lindquist E."/>
            <person name="Dehal P."/>
            <person name="Shapiro H."/>
            <person name="Jin Y.-S."/>
            <person name="Passoth V."/>
            <person name="Richardson P.M."/>
        </authorList>
    </citation>
    <scope>NUCLEOTIDE SEQUENCE [LARGE SCALE GENOMIC DNA]</scope>
    <source>
        <strain>ATCC 58785 / CBS 6054 / NBRC 10063 / NRRL Y-11545</strain>
    </source>
</reference>
<sequence length="916" mass="105558">MSRNSPLQSGQRGPPNGSPYPDSSQNNDTFLSRIFGLNSVYNHLQENYQYYDPEFDSTYNQQVLANSQRQDYDLFGNGLDKTNLLDSESDSDLSSSSSASPSVVVKPRFKRTEASDNEDDEVDDLLTSLSKPRSSPPRRKPTFNIPNARDIFSANGNTQATSVLPLYNQKYRKPVERDTGASAGDSRGYANSGIRRTNGTRFVIPPKERALYLWANITNMDEFLTDLYYYYRGKGMLNIVLSSIIDLLILVFILGFTVFLKWGINYRYFFDNYKDSTYITLADLIIPNFLVDEVPLLAKFFLFGFVCYIVLRLIQLYFNYNYKLKEIKNFYKYLINISNDDELMTITWKTIVERLMLLKDYNSLTSTTSHFDGATDHYINDLNSKVRLNAHDIANRIMRKENYMIALINKDVLDLSLSPFQNSSFQLINNKSVLTKTLEWNLKLCINNFAFNNEGQINPSILKDFNRNQLAKELNSRFKMAAIINLILCPFIVIYFVLLYFFRYFNEYKSNPASIMGLRQYTPYAEWKLREFNELPHFFIRRLQLSVGPANTYINMFPRGFLVINLMNLVNFISGAIMAILVIMGLWFEDENHSFWSFELTEGKSTLFYISIFGTLWAITSTSTSTSDTADNLNPNSHSFVYDPEASLRYVSQFTHYLPSSWNRRLHTVEVKNEFCELYSLKIIIILNEIFSLILTPFILWFRASSSSGAIIDFFREYSIHVDGLGYVCYFAMFNFEEKDKNMMFDLNKRKGKSKRSRRSKTSKTSSKKTVNEIELNNIKSKRREKAKISDSEDASSLPNTSDDESGNDLNADTYQDEKMIKSYMYFLESYGAGKADVRAINSNNKLLAKNSVISNIDPSPSLIIQGPSDNHSLLDSAYNINYKFDDAEQEESTRPGKKSGVLGMINQFYKQDLGR</sequence>
<comment type="function">
    <text evidence="2">Phospholipid scramblase involved in autophagy and cytoplasm to vacuole transport (Cvt) vesicle formation. Cycles between the preautophagosomal structure/phagophore assembly site (PAS) and the cytoplasmic vesicle pool and supplies membrane for the growing autophagosome. Lipid scramblase activity plays a key role in preautophagosomal structure/phagophore assembly by distributing the phospholipids that arrive through ATG2 from the cytoplasmic to the luminal leaflet of the bilayer, thereby driving autophagosomal membrane expansion. Required for mitophagy. Also involved in endoplasmic reticulum-specific autophagic process and is essential for the survival of cells subjected to severe ER stress. Different machineries are required for anterograde trafficking to the PAS during either the Cvt pathway or bulk autophagy and for retrograde trafficking.</text>
</comment>
<comment type="catalytic activity">
    <reaction evidence="2">
        <text>a 1,2-diacyl-sn-glycero-3-phosphocholine(in) = a 1,2-diacyl-sn-glycero-3-phosphocholine(out)</text>
        <dbReference type="Rhea" id="RHEA:38571"/>
        <dbReference type="ChEBI" id="CHEBI:57643"/>
    </reaction>
</comment>
<comment type="catalytic activity">
    <reaction evidence="2">
        <text>a 1,2-diacyl-sn-glycero-3-phospho-L-serine(in) = a 1,2-diacyl-sn-glycero-3-phospho-L-serine(out)</text>
        <dbReference type="Rhea" id="RHEA:38663"/>
        <dbReference type="ChEBI" id="CHEBI:57262"/>
    </reaction>
</comment>
<comment type="catalytic activity">
    <reaction evidence="2">
        <text>a 1,2-diacyl-sn-glycero-3-phosphoethanolamine(in) = a 1,2-diacyl-sn-glycero-3-phosphoethanolamine(out)</text>
        <dbReference type="Rhea" id="RHEA:38895"/>
        <dbReference type="ChEBI" id="CHEBI:64612"/>
    </reaction>
</comment>
<comment type="catalytic activity">
    <reaction evidence="2">
        <text>a 1,2-diacyl-sn-glycero-3-phospho-(1D-myo-inositol-3-phosphate)(in) = a 1,2-diacyl-sn-glycero-3-phospho-(1D-myo-inositol-3-phosphate)(out)</text>
        <dbReference type="Rhea" id="RHEA:67920"/>
        <dbReference type="ChEBI" id="CHEBI:58088"/>
    </reaction>
</comment>
<comment type="subunit">
    <text evidence="1">Homotrimer; forms a homotrimer with a central pore that forms a path between the two membrane leaflets.</text>
</comment>
<comment type="subcellular location">
    <subcellularLocation>
        <location evidence="2">Preautophagosomal structure membrane</location>
        <topology evidence="2">Multi-pass membrane protein</topology>
    </subcellularLocation>
    <subcellularLocation>
        <location evidence="2">Cytoplasmic vesicle membrane</location>
        <topology evidence="2">Multi-pass membrane protein</topology>
    </subcellularLocation>
    <subcellularLocation>
        <location evidence="2">Golgi apparatus membrane</location>
        <topology evidence="2">Multi-pass membrane protein</topology>
    </subcellularLocation>
    <subcellularLocation>
        <location evidence="2">Endoplasmic reticulum membrane</location>
        <topology evidence="2">Multi-pass membrane protein</topology>
    </subcellularLocation>
</comment>
<comment type="domain">
    <text evidence="1">Forms a homotrimer with a solvated central pore, which is connected laterally to the cytosol through the cavity within each protomer. Acts as a lipid scramblase that uses its central pore to function: the central pore opens laterally to accommodate lipid headgroups, thereby enabling lipid flipping and redistribution of lipids added to the outer leaflet of ATG9-containing vesicles, thereby enabling growth into autophagosomes.</text>
</comment>
<comment type="PTM">
    <text evidence="2">Phosphorylated by ATG1. ATG1 phosphorylation is required for preautophagosome elongation.</text>
</comment>
<comment type="similarity">
    <text evidence="5">Belongs to the ATG9 family.</text>
</comment>
<feature type="chain" id="PRO_0000317915" description="Autophagy-related protein 9">
    <location>
        <begin position="1"/>
        <end position="916"/>
    </location>
</feature>
<feature type="topological domain" description="Cytoplasmic" evidence="5">
    <location>
        <begin position="1"/>
        <end position="238"/>
    </location>
</feature>
<feature type="transmembrane region" description="Helical" evidence="3">
    <location>
        <begin position="239"/>
        <end position="259"/>
    </location>
</feature>
<feature type="topological domain" description="Lumenal" evidence="5">
    <location>
        <begin position="260"/>
        <end position="293"/>
    </location>
</feature>
<feature type="transmembrane region" description="Helical" evidence="3">
    <location>
        <begin position="294"/>
        <end position="314"/>
    </location>
</feature>
<feature type="topological domain" description="Cytoplasmic" evidence="5">
    <location>
        <begin position="315"/>
        <end position="481"/>
    </location>
</feature>
<feature type="intramembrane region" evidence="1">
    <location>
        <begin position="482"/>
        <end position="502"/>
    </location>
</feature>
<feature type="topological domain" description="Cytoplasmic" evidence="5">
    <location>
        <begin position="503"/>
        <end position="568"/>
    </location>
</feature>
<feature type="transmembrane region" description="Helical" evidence="3">
    <location>
        <begin position="569"/>
        <end position="589"/>
    </location>
</feature>
<feature type="topological domain" description="Lumenal" evidence="5">
    <location>
        <begin position="590"/>
        <end position="605"/>
    </location>
</feature>
<feature type="transmembrane region" description="Helical" evidence="3">
    <location>
        <begin position="606"/>
        <end position="626"/>
    </location>
</feature>
<feature type="topological domain" description="Cytoplasmic" evidence="5">
    <location>
        <begin position="627"/>
        <end position="681"/>
    </location>
</feature>
<feature type="intramembrane region" evidence="1">
    <location>
        <begin position="682"/>
        <end position="702"/>
    </location>
</feature>
<feature type="topological domain" description="Cytoplasmic" evidence="5">
    <location>
        <begin position="703"/>
        <end position="916"/>
    </location>
</feature>
<feature type="region of interest" description="Disordered" evidence="4">
    <location>
        <begin position="1"/>
        <end position="27"/>
    </location>
</feature>
<feature type="region of interest" description="Disordered" evidence="4">
    <location>
        <begin position="86"/>
        <end position="150"/>
    </location>
</feature>
<feature type="region of interest" description="Disordered" evidence="4">
    <location>
        <begin position="747"/>
        <end position="814"/>
    </location>
</feature>
<feature type="compositionally biased region" description="Polar residues" evidence="4">
    <location>
        <begin position="1"/>
        <end position="11"/>
    </location>
</feature>
<feature type="compositionally biased region" description="Low complexity" evidence="4">
    <location>
        <begin position="92"/>
        <end position="105"/>
    </location>
</feature>
<feature type="compositionally biased region" description="Acidic residues" evidence="4">
    <location>
        <begin position="115"/>
        <end position="124"/>
    </location>
</feature>
<feature type="compositionally biased region" description="Basic residues" evidence="4">
    <location>
        <begin position="750"/>
        <end position="762"/>
    </location>
</feature>
<dbReference type="EMBL" id="CP000502">
    <property type="protein sequence ID" value="ABN68594.2"/>
    <property type="molecule type" value="Genomic_DNA"/>
</dbReference>
<dbReference type="RefSeq" id="XP_001386623.2">
    <property type="nucleotide sequence ID" value="XM_001386586.1"/>
</dbReference>
<dbReference type="SMR" id="A3LZS3"/>
<dbReference type="FunCoup" id="A3LZS3">
    <property type="interactions" value="250"/>
</dbReference>
<dbReference type="STRING" id="322104.A3LZS3"/>
<dbReference type="GeneID" id="4841042"/>
<dbReference type="KEGG" id="pic:PICST_64286"/>
<dbReference type="eggNOG" id="KOG2173">
    <property type="taxonomic scope" value="Eukaryota"/>
</dbReference>
<dbReference type="HOGENOM" id="CLU_006200_1_0_1"/>
<dbReference type="InParanoid" id="A3LZS3"/>
<dbReference type="OrthoDB" id="2020634at2759"/>
<dbReference type="Proteomes" id="UP000002258">
    <property type="component" value="Chromosome 8"/>
</dbReference>
<dbReference type="GO" id="GO:0005776">
    <property type="term" value="C:autophagosome"/>
    <property type="evidence" value="ECO:0007669"/>
    <property type="project" value="TreeGrafter"/>
</dbReference>
<dbReference type="GO" id="GO:0030659">
    <property type="term" value="C:cytoplasmic vesicle membrane"/>
    <property type="evidence" value="ECO:0007669"/>
    <property type="project" value="UniProtKB-SubCell"/>
</dbReference>
<dbReference type="GO" id="GO:0005789">
    <property type="term" value="C:endoplasmic reticulum membrane"/>
    <property type="evidence" value="ECO:0007669"/>
    <property type="project" value="UniProtKB-SubCell"/>
</dbReference>
<dbReference type="GO" id="GO:0000139">
    <property type="term" value="C:Golgi membrane"/>
    <property type="evidence" value="ECO:0007669"/>
    <property type="project" value="UniProtKB-SubCell"/>
</dbReference>
<dbReference type="GO" id="GO:0034045">
    <property type="term" value="C:phagophore assembly site membrane"/>
    <property type="evidence" value="ECO:0007669"/>
    <property type="project" value="UniProtKB-SubCell"/>
</dbReference>
<dbReference type="GO" id="GO:0000422">
    <property type="term" value="P:autophagy of mitochondrion"/>
    <property type="evidence" value="ECO:0007669"/>
    <property type="project" value="TreeGrafter"/>
</dbReference>
<dbReference type="GO" id="GO:0006869">
    <property type="term" value="P:lipid transport"/>
    <property type="evidence" value="ECO:0007669"/>
    <property type="project" value="UniProtKB-KW"/>
</dbReference>
<dbReference type="GO" id="GO:0034727">
    <property type="term" value="P:piecemeal microautophagy of the nucleus"/>
    <property type="evidence" value="ECO:0007669"/>
    <property type="project" value="TreeGrafter"/>
</dbReference>
<dbReference type="GO" id="GO:0034497">
    <property type="term" value="P:protein localization to phagophore assembly site"/>
    <property type="evidence" value="ECO:0007669"/>
    <property type="project" value="TreeGrafter"/>
</dbReference>
<dbReference type="GO" id="GO:0061709">
    <property type="term" value="P:reticulophagy"/>
    <property type="evidence" value="ECO:0007669"/>
    <property type="project" value="TreeGrafter"/>
</dbReference>
<dbReference type="InterPro" id="IPR007241">
    <property type="entry name" value="Autophagy-rel_prot_9"/>
</dbReference>
<dbReference type="PANTHER" id="PTHR13038">
    <property type="entry name" value="APG9 AUTOPHAGY 9"/>
    <property type="match status" value="1"/>
</dbReference>
<dbReference type="PANTHER" id="PTHR13038:SF10">
    <property type="entry name" value="AUTOPHAGY-RELATED PROTEIN 9"/>
    <property type="match status" value="1"/>
</dbReference>
<dbReference type="Pfam" id="PF04109">
    <property type="entry name" value="ATG9"/>
    <property type="match status" value="1"/>
</dbReference>